<sequence length="585" mass="66158">MDVMKLDHDSVLKELERITSKAAEVQDNILRGILERNKDTEYLSKYMNGSKDVLEFKRAVPIIIYKDIYPYIQRIANGEDSSLITGHSITEILCSSGTSAGEPKLMPTIPEDLDRRTFLYNLIIPIVNKYITGLDKGKAMYLNFVKAETSTPCGLPIRAVLTSYYKSKHFQCRPYDPFNDLTSPIQTILCEDSNQSMYCQLLAGLIHRHKVMRLGAVFASAFLRAISYLEKKWSQLCEDIRTGSLNPMITDPGCQMAMSCLLMSPNPELASEIEEICGRSSWKGILCQLWPKAKFIEAVVTGSMAQYIPALEFFSQGKIPLVCPMYASSETYFGVNVEPLSKPSDVVFTLLPNMCYFEFIPLGKNGTLSFDLDDDEQVPCDKVVDLVNVKLGRYYELVVTTFAGLYRYRIGDVLQVAGFYNGAPQFRFICRRNVVLSIDLDKTNEEDLHRSITLAKKKLGSNAFLAEYTSYADTSSVPGHYVLFWEIQGHLEPKLMEECCVAVEEELDYIYRQCRTKERSIGALEIRVVKPGTFEKLMDLIISQGGSFNQYKTPRCVKSNSATFKLLNGHVMASFFSPRDPTWVP</sequence>
<name>GH39_ARATH</name>
<gene>
    <name type="primary">GH3.9</name>
    <name type="ordered locus">At2g47750</name>
    <name type="ORF">F17A22.14</name>
</gene>
<comment type="function">
    <text evidence="1">Catalyzes the synthesis of indole-3-acetic acid (IAA)-amino acid conjugates, providing a mechanism for the plant to cope with the presence of excess auxin.</text>
</comment>
<comment type="induction">
    <text evidence="2">Not induced by auxin.</text>
</comment>
<comment type="similarity">
    <text evidence="3">Belongs to the IAA-amido conjugating enzyme family.</text>
</comment>
<feature type="chain" id="PRO_0000203576" description="Putative indole-3-acetic acid-amido synthetase GH3.9">
    <location>
        <begin position="1"/>
        <end position="585"/>
    </location>
</feature>
<keyword id="KW-0436">Ligase</keyword>
<keyword id="KW-1185">Reference proteome</keyword>
<accession>O82243</accession>
<protein>
    <recommendedName>
        <fullName>Putative indole-3-acetic acid-amido synthetase GH3.9</fullName>
        <ecNumber>6.3.2.-</ecNumber>
    </recommendedName>
    <alternativeName>
        <fullName>Auxin-responsive GH3-like protein 9</fullName>
        <shortName>AtGH3-9</shortName>
    </alternativeName>
</protein>
<proteinExistence type="evidence at transcript level"/>
<reference key="1">
    <citation type="journal article" date="1999" name="Nature">
        <title>Sequence and analysis of chromosome 2 of the plant Arabidopsis thaliana.</title>
        <authorList>
            <person name="Lin X."/>
            <person name="Kaul S."/>
            <person name="Rounsley S.D."/>
            <person name="Shea T.P."/>
            <person name="Benito M.-I."/>
            <person name="Town C.D."/>
            <person name="Fujii C.Y."/>
            <person name="Mason T.M."/>
            <person name="Bowman C.L."/>
            <person name="Barnstead M.E."/>
            <person name="Feldblyum T.V."/>
            <person name="Buell C.R."/>
            <person name="Ketchum K.A."/>
            <person name="Lee J.J."/>
            <person name="Ronning C.M."/>
            <person name="Koo H.L."/>
            <person name="Moffat K.S."/>
            <person name="Cronin L.A."/>
            <person name="Shen M."/>
            <person name="Pai G."/>
            <person name="Van Aken S."/>
            <person name="Umayam L."/>
            <person name="Tallon L.J."/>
            <person name="Gill J.E."/>
            <person name="Adams M.D."/>
            <person name="Carrera A.J."/>
            <person name="Creasy T.H."/>
            <person name="Goodman H.M."/>
            <person name="Somerville C.R."/>
            <person name="Copenhaver G.P."/>
            <person name="Preuss D."/>
            <person name="Nierman W.C."/>
            <person name="White O."/>
            <person name="Eisen J.A."/>
            <person name="Salzberg S.L."/>
            <person name="Fraser C.M."/>
            <person name="Venter J.C."/>
        </authorList>
    </citation>
    <scope>NUCLEOTIDE SEQUENCE [LARGE SCALE GENOMIC DNA]</scope>
    <source>
        <strain>cv. Columbia</strain>
    </source>
</reference>
<reference key="2">
    <citation type="journal article" date="2017" name="Plant J.">
        <title>Araport11: a complete reannotation of the Arabidopsis thaliana reference genome.</title>
        <authorList>
            <person name="Cheng C.Y."/>
            <person name="Krishnakumar V."/>
            <person name="Chan A.P."/>
            <person name="Thibaud-Nissen F."/>
            <person name="Schobel S."/>
            <person name="Town C.D."/>
        </authorList>
    </citation>
    <scope>GENOME REANNOTATION</scope>
    <source>
        <strain>cv. Columbia</strain>
    </source>
</reference>
<reference key="3">
    <citation type="journal article" date="2003" name="Science">
        <title>Empirical analysis of transcriptional activity in the Arabidopsis genome.</title>
        <authorList>
            <person name="Yamada K."/>
            <person name="Lim J."/>
            <person name="Dale J.M."/>
            <person name="Chen H."/>
            <person name="Shinn P."/>
            <person name="Palm C.J."/>
            <person name="Southwick A.M."/>
            <person name="Wu H.C."/>
            <person name="Kim C.J."/>
            <person name="Nguyen M."/>
            <person name="Pham P.K."/>
            <person name="Cheuk R.F."/>
            <person name="Karlin-Newmann G."/>
            <person name="Liu S.X."/>
            <person name="Lam B."/>
            <person name="Sakano H."/>
            <person name="Wu T."/>
            <person name="Yu G."/>
            <person name="Miranda M."/>
            <person name="Quach H.L."/>
            <person name="Tripp M."/>
            <person name="Chang C.H."/>
            <person name="Lee J.M."/>
            <person name="Toriumi M.J."/>
            <person name="Chan M.M."/>
            <person name="Tang C.C."/>
            <person name="Onodera C.S."/>
            <person name="Deng J.M."/>
            <person name="Akiyama K."/>
            <person name="Ansari Y."/>
            <person name="Arakawa T."/>
            <person name="Banh J."/>
            <person name="Banno F."/>
            <person name="Bowser L."/>
            <person name="Brooks S.Y."/>
            <person name="Carninci P."/>
            <person name="Chao Q."/>
            <person name="Choy N."/>
            <person name="Enju A."/>
            <person name="Goldsmith A.D."/>
            <person name="Gurjal M."/>
            <person name="Hansen N.F."/>
            <person name="Hayashizaki Y."/>
            <person name="Johnson-Hopson C."/>
            <person name="Hsuan V.W."/>
            <person name="Iida K."/>
            <person name="Karnes M."/>
            <person name="Khan S."/>
            <person name="Koesema E."/>
            <person name="Ishida J."/>
            <person name="Jiang P.X."/>
            <person name="Jones T."/>
            <person name="Kawai J."/>
            <person name="Kamiya A."/>
            <person name="Meyers C."/>
            <person name="Nakajima M."/>
            <person name="Narusaka M."/>
            <person name="Seki M."/>
            <person name="Sakurai T."/>
            <person name="Satou M."/>
            <person name="Tamse R."/>
            <person name="Vaysberg M."/>
            <person name="Wallender E.K."/>
            <person name="Wong C."/>
            <person name="Yamamura Y."/>
            <person name="Yuan S."/>
            <person name="Shinozaki K."/>
            <person name="Davis R.W."/>
            <person name="Theologis A."/>
            <person name="Ecker J.R."/>
        </authorList>
    </citation>
    <scope>NUCLEOTIDE SEQUENCE [LARGE SCALE MRNA]</scope>
    <source>
        <strain>cv. Columbia</strain>
    </source>
</reference>
<reference key="4">
    <citation type="journal article" date="2005" name="Plant Cell">
        <title>Characterization of an Arabidopsis enzyme family that conjugates amino acids to indole-3-acetic acid.</title>
        <authorList>
            <person name="Staswick P.E."/>
            <person name="Serban B."/>
            <person name="Rowe M."/>
            <person name="Tiryaki I."/>
            <person name="Maldonado M.T."/>
            <person name="Maldonado M.C."/>
            <person name="Suza W."/>
        </authorList>
    </citation>
    <scope>IDENTIFICATION</scope>
    <scope>INDUCTION</scope>
</reference>
<reference key="5">
    <citation type="journal article" date="2002" name="Plant Mol. Biol.">
        <title>Auxin-responsive gene expression: genes, promoters and regulatory factors.</title>
        <authorList>
            <person name="Hagen G."/>
            <person name="Guilfoyle T.J."/>
        </authorList>
    </citation>
    <scope>NOMENCLATURE</scope>
</reference>
<dbReference type="EC" id="6.3.2.-"/>
<dbReference type="EMBL" id="AC005309">
    <property type="protein sequence ID" value="AAC63630.1"/>
    <property type="molecule type" value="Genomic_DNA"/>
</dbReference>
<dbReference type="EMBL" id="CP002685">
    <property type="protein sequence ID" value="AEC10882.1"/>
    <property type="molecule type" value="Genomic_DNA"/>
</dbReference>
<dbReference type="EMBL" id="AY054288">
    <property type="protein sequence ID" value="AAL06947.1"/>
    <property type="molecule type" value="mRNA"/>
</dbReference>
<dbReference type="EMBL" id="BT000629">
    <property type="protein sequence ID" value="AAN18195.1"/>
    <property type="molecule type" value="mRNA"/>
</dbReference>
<dbReference type="PIR" id="A84919">
    <property type="entry name" value="A84919"/>
</dbReference>
<dbReference type="RefSeq" id="NP_182296.1">
    <property type="nucleotide sequence ID" value="NM_130342.3"/>
</dbReference>
<dbReference type="SMR" id="O82243"/>
<dbReference type="BioGRID" id="4722">
    <property type="interactions" value="2"/>
</dbReference>
<dbReference type="FunCoup" id="O82243">
    <property type="interactions" value="1189"/>
</dbReference>
<dbReference type="IntAct" id="O82243">
    <property type="interactions" value="1"/>
</dbReference>
<dbReference type="STRING" id="3702.O82243"/>
<dbReference type="iPTMnet" id="O82243"/>
<dbReference type="PaxDb" id="3702-AT2G47750.1"/>
<dbReference type="ProteomicsDB" id="220752"/>
<dbReference type="EnsemblPlants" id="AT2G47750.1">
    <property type="protein sequence ID" value="AT2G47750.1"/>
    <property type="gene ID" value="AT2G47750"/>
</dbReference>
<dbReference type="GeneID" id="819387"/>
<dbReference type="Gramene" id="AT2G47750.1">
    <property type="protein sequence ID" value="AT2G47750.1"/>
    <property type="gene ID" value="AT2G47750"/>
</dbReference>
<dbReference type="KEGG" id="ath:AT2G47750"/>
<dbReference type="Araport" id="AT2G47750"/>
<dbReference type="TAIR" id="AT2G47750">
    <property type="gene designation" value="GH3.9"/>
</dbReference>
<dbReference type="eggNOG" id="ENOG502QPMW">
    <property type="taxonomic scope" value="Eukaryota"/>
</dbReference>
<dbReference type="HOGENOM" id="CLU_016249_2_1_1"/>
<dbReference type="InParanoid" id="O82243"/>
<dbReference type="OMA" id="FHNRAPQ"/>
<dbReference type="PhylomeDB" id="O82243"/>
<dbReference type="PRO" id="PR:O82243"/>
<dbReference type="Proteomes" id="UP000006548">
    <property type="component" value="Chromosome 2"/>
</dbReference>
<dbReference type="ExpressionAtlas" id="O82243">
    <property type="expression patterns" value="baseline and differential"/>
</dbReference>
<dbReference type="GO" id="GO:0009941">
    <property type="term" value="C:chloroplast envelope"/>
    <property type="evidence" value="ECO:0007005"/>
    <property type="project" value="TAIR"/>
</dbReference>
<dbReference type="GO" id="GO:0016874">
    <property type="term" value="F:ligase activity"/>
    <property type="evidence" value="ECO:0007669"/>
    <property type="project" value="UniProtKB-KW"/>
</dbReference>
<dbReference type="InterPro" id="IPR004993">
    <property type="entry name" value="GH3"/>
</dbReference>
<dbReference type="InterPro" id="IPR055378">
    <property type="entry name" value="GH3_C"/>
</dbReference>
<dbReference type="InterPro" id="IPR055377">
    <property type="entry name" value="GH3_M"/>
</dbReference>
<dbReference type="PANTHER" id="PTHR31901">
    <property type="entry name" value="GH3 DOMAIN-CONTAINING PROTEIN"/>
    <property type="match status" value="1"/>
</dbReference>
<dbReference type="PANTHER" id="PTHR31901:SF18">
    <property type="entry name" value="INDOLE-3-ACETIC ACID-AMIDO SYNTHETASE GH3.9-RELATED"/>
    <property type="match status" value="1"/>
</dbReference>
<dbReference type="Pfam" id="PF03321">
    <property type="entry name" value="GH3"/>
    <property type="match status" value="1"/>
</dbReference>
<dbReference type="Pfam" id="PF23572">
    <property type="entry name" value="GH3_C"/>
    <property type="match status" value="1"/>
</dbReference>
<dbReference type="Pfam" id="PF23571">
    <property type="entry name" value="GH3_M"/>
    <property type="match status" value="1"/>
</dbReference>
<evidence type="ECO:0000250" key="1"/>
<evidence type="ECO:0000269" key="2">
    <source>
    </source>
</evidence>
<evidence type="ECO:0000305" key="3"/>
<organism>
    <name type="scientific">Arabidopsis thaliana</name>
    <name type="common">Mouse-ear cress</name>
    <dbReference type="NCBI Taxonomy" id="3702"/>
    <lineage>
        <taxon>Eukaryota</taxon>
        <taxon>Viridiplantae</taxon>
        <taxon>Streptophyta</taxon>
        <taxon>Embryophyta</taxon>
        <taxon>Tracheophyta</taxon>
        <taxon>Spermatophyta</taxon>
        <taxon>Magnoliopsida</taxon>
        <taxon>eudicotyledons</taxon>
        <taxon>Gunneridae</taxon>
        <taxon>Pentapetalae</taxon>
        <taxon>rosids</taxon>
        <taxon>malvids</taxon>
        <taxon>Brassicales</taxon>
        <taxon>Brassicaceae</taxon>
        <taxon>Camelineae</taxon>
        <taxon>Arabidopsis</taxon>
    </lineage>
</organism>